<organism>
    <name type="scientific">Methylobacillus flagellatus (strain ATCC 51484 / DSM 6875 / VKM B-1610 / KT)</name>
    <dbReference type="NCBI Taxonomy" id="265072"/>
    <lineage>
        <taxon>Bacteria</taxon>
        <taxon>Pseudomonadati</taxon>
        <taxon>Pseudomonadota</taxon>
        <taxon>Betaproteobacteria</taxon>
        <taxon>Nitrosomonadales</taxon>
        <taxon>Methylophilaceae</taxon>
        <taxon>Methylobacillus</taxon>
    </lineage>
</organism>
<comment type="function">
    <text evidence="1">Catalyzes the ATP-dependent amination of UTP to CTP with either L-glutamine or ammonia as the source of nitrogen. Regulates intracellular CTP levels through interactions with the four ribonucleotide triphosphates.</text>
</comment>
<comment type="catalytic activity">
    <reaction evidence="1">
        <text>UTP + L-glutamine + ATP + H2O = CTP + L-glutamate + ADP + phosphate + 2 H(+)</text>
        <dbReference type="Rhea" id="RHEA:26426"/>
        <dbReference type="ChEBI" id="CHEBI:15377"/>
        <dbReference type="ChEBI" id="CHEBI:15378"/>
        <dbReference type="ChEBI" id="CHEBI:29985"/>
        <dbReference type="ChEBI" id="CHEBI:30616"/>
        <dbReference type="ChEBI" id="CHEBI:37563"/>
        <dbReference type="ChEBI" id="CHEBI:43474"/>
        <dbReference type="ChEBI" id="CHEBI:46398"/>
        <dbReference type="ChEBI" id="CHEBI:58359"/>
        <dbReference type="ChEBI" id="CHEBI:456216"/>
        <dbReference type="EC" id="6.3.4.2"/>
    </reaction>
</comment>
<comment type="catalytic activity">
    <reaction evidence="1">
        <text>L-glutamine + H2O = L-glutamate + NH4(+)</text>
        <dbReference type="Rhea" id="RHEA:15889"/>
        <dbReference type="ChEBI" id="CHEBI:15377"/>
        <dbReference type="ChEBI" id="CHEBI:28938"/>
        <dbReference type="ChEBI" id="CHEBI:29985"/>
        <dbReference type="ChEBI" id="CHEBI:58359"/>
    </reaction>
</comment>
<comment type="catalytic activity">
    <reaction evidence="1">
        <text>UTP + NH4(+) + ATP = CTP + ADP + phosphate + 2 H(+)</text>
        <dbReference type="Rhea" id="RHEA:16597"/>
        <dbReference type="ChEBI" id="CHEBI:15378"/>
        <dbReference type="ChEBI" id="CHEBI:28938"/>
        <dbReference type="ChEBI" id="CHEBI:30616"/>
        <dbReference type="ChEBI" id="CHEBI:37563"/>
        <dbReference type="ChEBI" id="CHEBI:43474"/>
        <dbReference type="ChEBI" id="CHEBI:46398"/>
        <dbReference type="ChEBI" id="CHEBI:456216"/>
    </reaction>
</comment>
<comment type="activity regulation">
    <text evidence="1">Allosterically activated by GTP, when glutamine is the substrate; GTP has no effect on the reaction when ammonia is the substrate. The allosteric effector GTP functions by stabilizing the protein conformation that binds the tetrahedral intermediate(s) formed during glutamine hydrolysis. Inhibited by the product CTP, via allosteric rather than competitive inhibition.</text>
</comment>
<comment type="pathway">
    <text evidence="1">Pyrimidine metabolism; CTP biosynthesis via de novo pathway; CTP from UDP: step 2/2.</text>
</comment>
<comment type="subunit">
    <text evidence="1">Homotetramer.</text>
</comment>
<comment type="miscellaneous">
    <text evidence="1">CTPSs have evolved a hybrid strategy for distinguishing between UTP and CTP. The overlapping regions of the product feedback inhibitory and substrate sites recognize a common feature in both compounds, the triphosphate moiety. To differentiate isosteric substrate and product pyrimidine rings, an additional pocket far from the expected kinase/ligase catalytic site, specifically recognizes the cytosine and ribose portions of the product inhibitor.</text>
</comment>
<comment type="similarity">
    <text evidence="1">Belongs to the CTP synthase family.</text>
</comment>
<protein>
    <recommendedName>
        <fullName evidence="1">CTP synthase</fullName>
        <ecNumber evidence="1">6.3.4.2</ecNumber>
    </recommendedName>
    <alternativeName>
        <fullName evidence="1">Cytidine 5'-triphosphate synthase</fullName>
    </alternativeName>
    <alternativeName>
        <fullName evidence="1">Cytidine triphosphate synthetase</fullName>
        <shortName evidence="1">CTP synthetase</shortName>
        <shortName evidence="1">CTPS</shortName>
    </alternativeName>
    <alternativeName>
        <fullName evidence="1">UTP--ammonia ligase</fullName>
    </alternativeName>
</protein>
<feature type="chain" id="PRO_0000266153" description="CTP synthase">
    <location>
        <begin position="1"/>
        <end position="542"/>
    </location>
</feature>
<feature type="domain" description="Glutamine amidotransferase type-1" evidence="1">
    <location>
        <begin position="290"/>
        <end position="542"/>
    </location>
</feature>
<feature type="region of interest" description="Amidoligase domain" evidence="1">
    <location>
        <begin position="1"/>
        <end position="265"/>
    </location>
</feature>
<feature type="active site" description="Nucleophile; for glutamine hydrolysis" evidence="1">
    <location>
        <position position="378"/>
    </location>
</feature>
<feature type="active site" evidence="1">
    <location>
        <position position="515"/>
    </location>
</feature>
<feature type="active site" evidence="1">
    <location>
        <position position="517"/>
    </location>
</feature>
<feature type="binding site" evidence="1">
    <location>
        <position position="13"/>
    </location>
    <ligand>
        <name>CTP</name>
        <dbReference type="ChEBI" id="CHEBI:37563"/>
        <note>allosteric inhibitor</note>
    </ligand>
</feature>
<feature type="binding site" evidence="1">
    <location>
        <position position="13"/>
    </location>
    <ligand>
        <name>UTP</name>
        <dbReference type="ChEBI" id="CHEBI:46398"/>
    </ligand>
</feature>
<feature type="binding site" evidence="1">
    <location>
        <begin position="14"/>
        <end position="19"/>
    </location>
    <ligand>
        <name>ATP</name>
        <dbReference type="ChEBI" id="CHEBI:30616"/>
    </ligand>
</feature>
<feature type="binding site" evidence="1">
    <location>
        <position position="71"/>
    </location>
    <ligand>
        <name>ATP</name>
        <dbReference type="ChEBI" id="CHEBI:30616"/>
    </ligand>
</feature>
<feature type="binding site" evidence="1">
    <location>
        <position position="71"/>
    </location>
    <ligand>
        <name>Mg(2+)</name>
        <dbReference type="ChEBI" id="CHEBI:18420"/>
    </ligand>
</feature>
<feature type="binding site" evidence="1">
    <location>
        <position position="139"/>
    </location>
    <ligand>
        <name>Mg(2+)</name>
        <dbReference type="ChEBI" id="CHEBI:18420"/>
    </ligand>
</feature>
<feature type="binding site" evidence="1">
    <location>
        <begin position="146"/>
        <end position="148"/>
    </location>
    <ligand>
        <name>CTP</name>
        <dbReference type="ChEBI" id="CHEBI:37563"/>
        <note>allosteric inhibitor</note>
    </ligand>
</feature>
<feature type="binding site" evidence="1">
    <location>
        <begin position="186"/>
        <end position="191"/>
    </location>
    <ligand>
        <name>CTP</name>
        <dbReference type="ChEBI" id="CHEBI:37563"/>
        <note>allosteric inhibitor</note>
    </ligand>
</feature>
<feature type="binding site" evidence="1">
    <location>
        <begin position="186"/>
        <end position="191"/>
    </location>
    <ligand>
        <name>UTP</name>
        <dbReference type="ChEBI" id="CHEBI:46398"/>
    </ligand>
</feature>
<feature type="binding site" evidence="1">
    <location>
        <position position="222"/>
    </location>
    <ligand>
        <name>CTP</name>
        <dbReference type="ChEBI" id="CHEBI:37563"/>
        <note>allosteric inhibitor</note>
    </ligand>
</feature>
<feature type="binding site" evidence="1">
    <location>
        <position position="222"/>
    </location>
    <ligand>
        <name>UTP</name>
        <dbReference type="ChEBI" id="CHEBI:46398"/>
    </ligand>
</feature>
<feature type="binding site" evidence="1">
    <location>
        <position position="351"/>
    </location>
    <ligand>
        <name>L-glutamine</name>
        <dbReference type="ChEBI" id="CHEBI:58359"/>
    </ligand>
</feature>
<feature type="binding site" evidence="1">
    <location>
        <begin position="379"/>
        <end position="382"/>
    </location>
    <ligand>
        <name>L-glutamine</name>
        <dbReference type="ChEBI" id="CHEBI:58359"/>
    </ligand>
</feature>
<feature type="binding site" evidence="1">
    <location>
        <position position="402"/>
    </location>
    <ligand>
        <name>L-glutamine</name>
        <dbReference type="ChEBI" id="CHEBI:58359"/>
    </ligand>
</feature>
<feature type="binding site" evidence="1">
    <location>
        <position position="468"/>
    </location>
    <ligand>
        <name>L-glutamine</name>
        <dbReference type="ChEBI" id="CHEBI:58359"/>
    </ligand>
</feature>
<reference key="1">
    <citation type="submission" date="2006-03" db="EMBL/GenBank/DDBJ databases">
        <title>Complete sequence of Methylobacillus flagellatus KT.</title>
        <authorList>
            <consortium name="US DOE Joint Genome Institute"/>
            <person name="Copeland A."/>
            <person name="Lucas S."/>
            <person name="Lapidus A."/>
            <person name="Barry K."/>
            <person name="Detter J.C."/>
            <person name="Glavina del Rio T."/>
            <person name="Hammon N."/>
            <person name="Israni S."/>
            <person name="Dalin E."/>
            <person name="Tice H."/>
            <person name="Pitluck S."/>
            <person name="Brettin T."/>
            <person name="Bruce D."/>
            <person name="Han C."/>
            <person name="Tapia R."/>
            <person name="Saunders E."/>
            <person name="Gilna P."/>
            <person name="Schmutz J."/>
            <person name="Larimer F."/>
            <person name="Land M."/>
            <person name="Kyrpides N."/>
            <person name="Anderson I."/>
            <person name="Richardson P."/>
        </authorList>
    </citation>
    <scope>NUCLEOTIDE SEQUENCE [LARGE SCALE GENOMIC DNA]</scope>
    <source>
        <strain>ATCC 51484 / DSM 6875 / VKM B-1610 / KT</strain>
    </source>
</reference>
<dbReference type="EC" id="6.3.4.2" evidence="1"/>
<dbReference type="EMBL" id="CP000284">
    <property type="protein sequence ID" value="ABE50178.1"/>
    <property type="molecule type" value="Genomic_DNA"/>
</dbReference>
<dbReference type="RefSeq" id="WP_011480132.1">
    <property type="nucleotide sequence ID" value="NC_007947.1"/>
</dbReference>
<dbReference type="SMR" id="Q1H009"/>
<dbReference type="STRING" id="265072.Mfla_1911"/>
<dbReference type="KEGG" id="mfa:Mfla_1911"/>
<dbReference type="eggNOG" id="COG0504">
    <property type="taxonomic scope" value="Bacteria"/>
</dbReference>
<dbReference type="HOGENOM" id="CLU_011675_5_0_4"/>
<dbReference type="OrthoDB" id="9801107at2"/>
<dbReference type="UniPathway" id="UPA00159">
    <property type="reaction ID" value="UER00277"/>
</dbReference>
<dbReference type="Proteomes" id="UP000002440">
    <property type="component" value="Chromosome"/>
</dbReference>
<dbReference type="GO" id="GO:0005829">
    <property type="term" value="C:cytosol"/>
    <property type="evidence" value="ECO:0007669"/>
    <property type="project" value="TreeGrafter"/>
</dbReference>
<dbReference type="GO" id="GO:0005524">
    <property type="term" value="F:ATP binding"/>
    <property type="evidence" value="ECO:0007669"/>
    <property type="project" value="UniProtKB-KW"/>
</dbReference>
<dbReference type="GO" id="GO:0003883">
    <property type="term" value="F:CTP synthase activity"/>
    <property type="evidence" value="ECO:0007669"/>
    <property type="project" value="UniProtKB-UniRule"/>
</dbReference>
<dbReference type="GO" id="GO:0004359">
    <property type="term" value="F:glutaminase activity"/>
    <property type="evidence" value="ECO:0007669"/>
    <property type="project" value="RHEA"/>
</dbReference>
<dbReference type="GO" id="GO:0042802">
    <property type="term" value="F:identical protein binding"/>
    <property type="evidence" value="ECO:0007669"/>
    <property type="project" value="TreeGrafter"/>
</dbReference>
<dbReference type="GO" id="GO:0046872">
    <property type="term" value="F:metal ion binding"/>
    <property type="evidence" value="ECO:0007669"/>
    <property type="project" value="UniProtKB-KW"/>
</dbReference>
<dbReference type="GO" id="GO:0044210">
    <property type="term" value="P:'de novo' CTP biosynthetic process"/>
    <property type="evidence" value="ECO:0007669"/>
    <property type="project" value="UniProtKB-UniRule"/>
</dbReference>
<dbReference type="GO" id="GO:0019856">
    <property type="term" value="P:pyrimidine nucleobase biosynthetic process"/>
    <property type="evidence" value="ECO:0007669"/>
    <property type="project" value="TreeGrafter"/>
</dbReference>
<dbReference type="CDD" id="cd03113">
    <property type="entry name" value="CTPS_N"/>
    <property type="match status" value="1"/>
</dbReference>
<dbReference type="CDD" id="cd01746">
    <property type="entry name" value="GATase1_CTP_Synthase"/>
    <property type="match status" value="1"/>
</dbReference>
<dbReference type="FunFam" id="3.40.50.300:FF:000009">
    <property type="entry name" value="CTP synthase"/>
    <property type="match status" value="1"/>
</dbReference>
<dbReference type="FunFam" id="3.40.50.880:FF:000002">
    <property type="entry name" value="CTP synthase"/>
    <property type="match status" value="1"/>
</dbReference>
<dbReference type="Gene3D" id="3.40.50.880">
    <property type="match status" value="1"/>
</dbReference>
<dbReference type="Gene3D" id="3.40.50.300">
    <property type="entry name" value="P-loop containing nucleotide triphosphate hydrolases"/>
    <property type="match status" value="1"/>
</dbReference>
<dbReference type="HAMAP" id="MF_01227">
    <property type="entry name" value="PyrG"/>
    <property type="match status" value="1"/>
</dbReference>
<dbReference type="InterPro" id="IPR029062">
    <property type="entry name" value="Class_I_gatase-like"/>
</dbReference>
<dbReference type="InterPro" id="IPR004468">
    <property type="entry name" value="CTP_synthase"/>
</dbReference>
<dbReference type="InterPro" id="IPR017456">
    <property type="entry name" value="CTP_synthase_N"/>
</dbReference>
<dbReference type="InterPro" id="IPR017926">
    <property type="entry name" value="GATASE"/>
</dbReference>
<dbReference type="InterPro" id="IPR033828">
    <property type="entry name" value="GATase1_CTP_Synthase"/>
</dbReference>
<dbReference type="InterPro" id="IPR027417">
    <property type="entry name" value="P-loop_NTPase"/>
</dbReference>
<dbReference type="NCBIfam" id="NF003792">
    <property type="entry name" value="PRK05380.1"/>
    <property type="match status" value="1"/>
</dbReference>
<dbReference type="NCBIfam" id="TIGR00337">
    <property type="entry name" value="PyrG"/>
    <property type="match status" value="1"/>
</dbReference>
<dbReference type="PANTHER" id="PTHR11550">
    <property type="entry name" value="CTP SYNTHASE"/>
    <property type="match status" value="1"/>
</dbReference>
<dbReference type="PANTHER" id="PTHR11550:SF0">
    <property type="entry name" value="CTP SYNTHASE-RELATED"/>
    <property type="match status" value="1"/>
</dbReference>
<dbReference type="Pfam" id="PF06418">
    <property type="entry name" value="CTP_synth_N"/>
    <property type="match status" value="1"/>
</dbReference>
<dbReference type="Pfam" id="PF00117">
    <property type="entry name" value="GATase"/>
    <property type="match status" value="1"/>
</dbReference>
<dbReference type="SUPFAM" id="SSF52317">
    <property type="entry name" value="Class I glutamine amidotransferase-like"/>
    <property type="match status" value="1"/>
</dbReference>
<dbReference type="SUPFAM" id="SSF52540">
    <property type="entry name" value="P-loop containing nucleoside triphosphate hydrolases"/>
    <property type="match status" value="1"/>
</dbReference>
<dbReference type="PROSITE" id="PS51273">
    <property type="entry name" value="GATASE_TYPE_1"/>
    <property type="match status" value="1"/>
</dbReference>
<accession>Q1H009</accession>
<proteinExistence type="inferred from homology"/>
<gene>
    <name evidence="1" type="primary">pyrG</name>
    <name type="ordered locus">Mfla_1911</name>
</gene>
<name>PYRG_METFK</name>
<evidence type="ECO:0000255" key="1">
    <source>
        <dbReference type="HAMAP-Rule" id="MF_01227"/>
    </source>
</evidence>
<sequence>MTKFVFVTGGVVSSLGKGIAAASLGAILESRGIKVTMLKLDPYINVDPGTMSPFQHGEVFVTDDGAETDLDLGHYERFISARMGKRNNFTTGQIYETVIKKERRGEYLGKTVQVIPHITDEIKAHVKRGAEGADVAIVEVGGTVGDIESLPFLEAIRQMGIEEGRSNTCFMHLTLLPWIPTAGELKTKPTQHSVKELREIGIQPDILLCRADRAIPEDEKRKIALFTNVPHEAVISVVDADSIYSIPRMLHDQMLDEIVCHKLNLLARAADLSSWNRIVHALKNPKHEVNVAFVGKYVDLTESYKSLTEALIHAGIHNESKVNIHYIDSEEVEKHGTGELEKMDAILVPGGFGKRGTEGKIAAIRYARESKTPYLGICLGMQLAVIEFARNVAGLKDANSTEFDPHTPHPLVGLITEWKNADGKVEQRSEDSDLGGTMRLGAQKCPIVPDTKAFTIYGAEVNERHRHRYEVNNHYVDKLEKAGLVVSARTPTEQLCEMVELPSEVHPWFVACQFHPEFTSNPRTGHPLFNAYIAAALANRKA</sequence>
<keyword id="KW-0067">ATP-binding</keyword>
<keyword id="KW-0315">Glutamine amidotransferase</keyword>
<keyword id="KW-0436">Ligase</keyword>
<keyword id="KW-0460">Magnesium</keyword>
<keyword id="KW-0479">Metal-binding</keyword>
<keyword id="KW-0547">Nucleotide-binding</keyword>
<keyword id="KW-0665">Pyrimidine biosynthesis</keyword>
<keyword id="KW-1185">Reference proteome</keyword>